<organism>
    <name type="scientific">Cereibacter sphaeroides (strain ATCC 17029 / ATH 2.4.9)</name>
    <name type="common">Rhodobacter sphaeroides</name>
    <dbReference type="NCBI Taxonomy" id="349101"/>
    <lineage>
        <taxon>Bacteria</taxon>
        <taxon>Pseudomonadati</taxon>
        <taxon>Pseudomonadota</taxon>
        <taxon>Alphaproteobacteria</taxon>
        <taxon>Rhodobacterales</taxon>
        <taxon>Paracoccaceae</taxon>
        <taxon>Cereibacter</taxon>
    </lineage>
</organism>
<dbReference type="EC" id="2.8.1.13" evidence="1"/>
<dbReference type="EMBL" id="CP000577">
    <property type="protein sequence ID" value="ABN76387.1"/>
    <property type="molecule type" value="Genomic_DNA"/>
</dbReference>
<dbReference type="RefSeq" id="WP_011840914.1">
    <property type="nucleotide sequence ID" value="NC_009049.1"/>
</dbReference>
<dbReference type="SMR" id="A3PJ71"/>
<dbReference type="KEGG" id="rsh:Rsph17029_1277"/>
<dbReference type="HOGENOM" id="CLU_035188_0_0_5"/>
<dbReference type="GO" id="GO:0005737">
    <property type="term" value="C:cytoplasm"/>
    <property type="evidence" value="ECO:0007669"/>
    <property type="project" value="UniProtKB-SubCell"/>
</dbReference>
<dbReference type="GO" id="GO:0005524">
    <property type="term" value="F:ATP binding"/>
    <property type="evidence" value="ECO:0007669"/>
    <property type="project" value="UniProtKB-KW"/>
</dbReference>
<dbReference type="GO" id="GO:0000049">
    <property type="term" value="F:tRNA binding"/>
    <property type="evidence" value="ECO:0007669"/>
    <property type="project" value="UniProtKB-KW"/>
</dbReference>
<dbReference type="GO" id="GO:0103016">
    <property type="term" value="F:tRNA-uridine 2-sulfurtransferase activity"/>
    <property type="evidence" value="ECO:0007669"/>
    <property type="project" value="UniProtKB-EC"/>
</dbReference>
<dbReference type="GO" id="GO:0002143">
    <property type="term" value="P:tRNA wobble position uridine thiolation"/>
    <property type="evidence" value="ECO:0007669"/>
    <property type="project" value="TreeGrafter"/>
</dbReference>
<dbReference type="CDD" id="cd01998">
    <property type="entry name" value="MnmA_TRMU-like"/>
    <property type="match status" value="1"/>
</dbReference>
<dbReference type="FunFam" id="2.30.30.280:FF:000001">
    <property type="entry name" value="tRNA-specific 2-thiouridylase MnmA"/>
    <property type="match status" value="1"/>
</dbReference>
<dbReference type="FunFam" id="3.40.50.620:FF:000115">
    <property type="entry name" value="tRNA-specific 2-thiouridylase MnmA"/>
    <property type="match status" value="1"/>
</dbReference>
<dbReference type="Gene3D" id="2.30.30.280">
    <property type="entry name" value="Adenine nucleotide alpha hydrolases-like domains"/>
    <property type="match status" value="1"/>
</dbReference>
<dbReference type="Gene3D" id="3.40.50.620">
    <property type="entry name" value="HUPs"/>
    <property type="match status" value="1"/>
</dbReference>
<dbReference type="Gene3D" id="2.40.30.10">
    <property type="entry name" value="Translation factors"/>
    <property type="match status" value="1"/>
</dbReference>
<dbReference type="HAMAP" id="MF_00144">
    <property type="entry name" value="tRNA_thiouridyl_MnmA"/>
    <property type="match status" value="1"/>
</dbReference>
<dbReference type="InterPro" id="IPR004506">
    <property type="entry name" value="MnmA-like"/>
</dbReference>
<dbReference type="InterPro" id="IPR046885">
    <property type="entry name" value="MnmA-like_C"/>
</dbReference>
<dbReference type="InterPro" id="IPR046884">
    <property type="entry name" value="MnmA-like_central"/>
</dbReference>
<dbReference type="InterPro" id="IPR023382">
    <property type="entry name" value="MnmA-like_central_sf"/>
</dbReference>
<dbReference type="InterPro" id="IPR014729">
    <property type="entry name" value="Rossmann-like_a/b/a_fold"/>
</dbReference>
<dbReference type="NCBIfam" id="NF001138">
    <property type="entry name" value="PRK00143.1"/>
    <property type="match status" value="1"/>
</dbReference>
<dbReference type="NCBIfam" id="TIGR00420">
    <property type="entry name" value="trmU"/>
    <property type="match status" value="1"/>
</dbReference>
<dbReference type="PANTHER" id="PTHR11933:SF5">
    <property type="entry name" value="MITOCHONDRIAL TRNA-SPECIFIC 2-THIOURIDYLASE 1"/>
    <property type="match status" value="1"/>
</dbReference>
<dbReference type="PANTHER" id="PTHR11933">
    <property type="entry name" value="TRNA 5-METHYLAMINOMETHYL-2-THIOURIDYLATE -METHYLTRANSFERASE"/>
    <property type="match status" value="1"/>
</dbReference>
<dbReference type="Pfam" id="PF03054">
    <property type="entry name" value="tRNA_Me_trans"/>
    <property type="match status" value="1"/>
</dbReference>
<dbReference type="Pfam" id="PF20258">
    <property type="entry name" value="tRNA_Me_trans_C"/>
    <property type="match status" value="1"/>
</dbReference>
<dbReference type="Pfam" id="PF20259">
    <property type="entry name" value="tRNA_Me_trans_M"/>
    <property type="match status" value="1"/>
</dbReference>
<dbReference type="SUPFAM" id="SSF52402">
    <property type="entry name" value="Adenine nucleotide alpha hydrolases-like"/>
    <property type="match status" value="1"/>
</dbReference>
<reference key="1">
    <citation type="submission" date="2007-02" db="EMBL/GenBank/DDBJ databases">
        <title>Complete sequence of chromosome 1 of Rhodobacter sphaeroides ATCC 17029.</title>
        <authorList>
            <person name="Copeland A."/>
            <person name="Lucas S."/>
            <person name="Lapidus A."/>
            <person name="Barry K."/>
            <person name="Detter J.C."/>
            <person name="Glavina del Rio T."/>
            <person name="Hammon N."/>
            <person name="Israni S."/>
            <person name="Dalin E."/>
            <person name="Tice H."/>
            <person name="Pitluck S."/>
            <person name="Kiss H."/>
            <person name="Brettin T."/>
            <person name="Bruce D."/>
            <person name="Han C."/>
            <person name="Tapia R."/>
            <person name="Gilna P."/>
            <person name="Schmutz J."/>
            <person name="Larimer F."/>
            <person name="Land M."/>
            <person name="Hauser L."/>
            <person name="Kyrpides N."/>
            <person name="Mikhailova N."/>
            <person name="Richardson P."/>
            <person name="Mackenzie C."/>
            <person name="Choudhary M."/>
            <person name="Donohue T.J."/>
            <person name="Kaplan S."/>
        </authorList>
    </citation>
    <scope>NUCLEOTIDE SEQUENCE [LARGE SCALE GENOMIC DNA]</scope>
    <source>
        <strain>ATCC 17029 / ATH 2.4.9</strain>
    </source>
</reference>
<accession>A3PJ71</accession>
<proteinExistence type="inferred from homology"/>
<sequence length="379" mass="40945">MLDHPLNSLGFAKPPAATRVVVAMSGGVDSSVVAAELAAEGYDVVGVTLQLYDHGAALAKKGACCAGRDIHDARRVAETMGFPHYVLDYENTFREAVIDEFADAYLAGATPVPCIRCNERVKFKDLLQTAKDLDADCMATGHYIQRKMGPAGPELHCAADAARDQSYFLFSTTPEQLAFLRFPLGHLASKAETRALAARHGLPVADKPDSQDICFVPNGNYAEVIQKLRPGAADPGEIVDLSGRVLGEHRGVIHYTIGQRRGLGIGGLGDPLYVVRLDPERRQVIVGPKEALSTRIVPVREINWLGDAPLTSRSEWQVMAKVRSTRAPREAVIRPLSDTEAEVELIAPEDGVSPGQACVFYAPGDSRILGGGWIWRGAR</sequence>
<gene>
    <name evidence="1" type="primary">mnmA</name>
    <name type="ordered locus">Rsph17029_1277</name>
</gene>
<comment type="function">
    <text evidence="1">Catalyzes the 2-thiolation of uridine at the wobble position (U34) of tRNA, leading to the formation of s(2)U34.</text>
</comment>
<comment type="catalytic activity">
    <reaction evidence="1">
        <text>S-sulfanyl-L-cysteinyl-[protein] + uridine(34) in tRNA + AH2 + ATP = 2-thiouridine(34) in tRNA + L-cysteinyl-[protein] + A + AMP + diphosphate + H(+)</text>
        <dbReference type="Rhea" id="RHEA:47032"/>
        <dbReference type="Rhea" id="RHEA-COMP:10131"/>
        <dbReference type="Rhea" id="RHEA-COMP:11726"/>
        <dbReference type="Rhea" id="RHEA-COMP:11727"/>
        <dbReference type="Rhea" id="RHEA-COMP:11728"/>
        <dbReference type="ChEBI" id="CHEBI:13193"/>
        <dbReference type="ChEBI" id="CHEBI:15378"/>
        <dbReference type="ChEBI" id="CHEBI:17499"/>
        <dbReference type="ChEBI" id="CHEBI:29950"/>
        <dbReference type="ChEBI" id="CHEBI:30616"/>
        <dbReference type="ChEBI" id="CHEBI:33019"/>
        <dbReference type="ChEBI" id="CHEBI:61963"/>
        <dbReference type="ChEBI" id="CHEBI:65315"/>
        <dbReference type="ChEBI" id="CHEBI:87170"/>
        <dbReference type="ChEBI" id="CHEBI:456215"/>
        <dbReference type="EC" id="2.8.1.13"/>
    </reaction>
</comment>
<comment type="subcellular location">
    <subcellularLocation>
        <location evidence="1">Cytoplasm</location>
    </subcellularLocation>
</comment>
<comment type="similarity">
    <text evidence="1">Belongs to the MnmA/TRMU family.</text>
</comment>
<feature type="chain" id="PRO_0000349770" description="tRNA-specific 2-thiouridylase MnmA">
    <location>
        <begin position="1"/>
        <end position="379"/>
    </location>
</feature>
<feature type="region of interest" description="Interaction with tRNA" evidence="1">
    <location>
        <begin position="163"/>
        <end position="165"/>
    </location>
</feature>
<feature type="active site" description="Nucleophile" evidence="1">
    <location>
        <position position="117"/>
    </location>
</feature>
<feature type="active site" description="Cysteine persulfide intermediate" evidence="1">
    <location>
        <position position="214"/>
    </location>
</feature>
<feature type="binding site" evidence="1">
    <location>
        <begin position="23"/>
        <end position="30"/>
    </location>
    <ligand>
        <name>ATP</name>
        <dbReference type="ChEBI" id="CHEBI:30616"/>
    </ligand>
</feature>
<feature type="binding site" evidence="1">
    <location>
        <position position="49"/>
    </location>
    <ligand>
        <name>ATP</name>
        <dbReference type="ChEBI" id="CHEBI:30616"/>
    </ligand>
</feature>
<feature type="binding site" evidence="1">
    <location>
        <position position="141"/>
    </location>
    <ligand>
        <name>ATP</name>
        <dbReference type="ChEBI" id="CHEBI:30616"/>
    </ligand>
</feature>
<feature type="site" description="Interaction with tRNA" evidence="1">
    <location>
        <position position="142"/>
    </location>
</feature>
<feature type="site" description="Interaction with tRNA" evidence="1">
    <location>
        <position position="356"/>
    </location>
</feature>
<feature type="disulfide bond" description="Alternate" evidence="1">
    <location>
        <begin position="117"/>
        <end position="214"/>
    </location>
</feature>
<evidence type="ECO:0000255" key="1">
    <source>
        <dbReference type="HAMAP-Rule" id="MF_00144"/>
    </source>
</evidence>
<keyword id="KW-0067">ATP-binding</keyword>
<keyword id="KW-0963">Cytoplasm</keyword>
<keyword id="KW-1015">Disulfide bond</keyword>
<keyword id="KW-0547">Nucleotide-binding</keyword>
<keyword id="KW-0694">RNA-binding</keyword>
<keyword id="KW-0808">Transferase</keyword>
<keyword id="KW-0819">tRNA processing</keyword>
<keyword id="KW-0820">tRNA-binding</keyword>
<name>MNMA_CERS1</name>
<protein>
    <recommendedName>
        <fullName evidence="1">tRNA-specific 2-thiouridylase MnmA</fullName>
        <ecNumber evidence="1">2.8.1.13</ecNumber>
    </recommendedName>
</protein>